<accession>G0RYE0</accession>
<gene>
    <name type="ORF">CTHT_0006350</name>
</gene>
<organism>
    <name type="scientific">Chaetomium thermophilum (strain DSM 1495 / CBS 144.50 / IMI 039719)</name>
    <name type="common">Thermochaetoides thermophila</name>
    <dbReference type="NCBI Taxonomy" id="759272"/>
    <lineage>
        <taxon>Eukaryota</taxon>
        <taxon>Fungi</taxon>
        <taxon>Dikarya</taxon>
        <taxon>Ascomycota</taxon>
        <taxon>Pezizomycotina</taxon>
        <taxon>Sordariomycetes</taxon>
        <taxon>Sordariomycetidae</taxon>
        <taxon>Sordariales</taxon>
        <taxon>Chaetomiaceae</taxon>
        <taxon>Thermochaetoides</taxon>
    </lineage>
</organism>
<name>ODPB_CHATD</name>
<comment type="function">
    <text evidence="3 4 7">The 10-megadalton pyruvate dehydrogenase complex contains multiple copies of three enzymatic components: pyruvate dehydrogenase (E1), dihydrolipoamide acetyltransferase (E2) and lipoamide dehydrogenase (E3) and catalyzes the overall oxidative decarboxylation of pyruvate to form acetyl-CoA and CO(2) (PubMed:33567276, PubMed:34836937). Within the complex, pyruvate and thiamine pyrophosphate (TPP or vitamin B1) are bound by pyruvate dehydrogenase E1 subunits alpha and beta and pyruvate is decarboxylated leading to the 2-carbon hydrohyethyl bound to TPP. The E2 component contains covalently-bound lipoyl cofactors and transfers the hydroxyethyl group from TPP to an oxidized form of covalently bound lipoamide, and the resulting acetyl group is then transferred to free coenzyme A to form acetyl-CoA and reduced dihydrolipoamide-E2. Finally, the flavoprotein dihydrolipoamide dehydrogenase (E3) re-oxidizes the lipoyl group of dihydrolipoamide-E2 to form lipoamide-E2 and NADH. A fourth subunit, E3BP, is responsible for tethering E3 in proximity to the core, forming the entire metabolon (Probable).</text>
</comment>
<comment type="catalytic activity">
    <reaction evidence="3 4">
        <text>N(6)-[(R)-lipoyl]-L-lysyl-[protein] + pyruvate + H(+) = N(6)-[(R)-S(8)-acetyldihydrolipoyl]-L-lysyl-[protein] + CO2</text>
        <dbReference type="Rhea" id="RHEA:19189"/>
        <dbReference type="Rhea" id="RHEA-COMP:10474"/>
        <dbReference type="Rhea" id="RHEA-COMP:10478"/>
        <dbReference type="ChEBI" id="CHEBI:15361"/>
        <dbReference type="ChEBI" id="CHEBI:15378"/>
        <dbReference type="ChEBI" id="CHEBI:16526"/>
        <dbReference type="ChEBI" id="CHEBI:83099"/>
        <dbReference type="ChEBI" id="CHEBI:83111"/>
        <dbReference type="EC" id="1.2.4.1"/>
    </reaction>
    <physiologicalReaction direction="left-to-right" evidence="3 4">
        <dbReference type="Rhea" id="RHEA:19190"/>
    </physiologicalReaction>
</comment>
<comment type="cofactor">
    <cofactor evidence="1">
        <name>thiamine diphosphate</name>
        <dbReference type="ChEBI" id="CHEBI:58937"/>
    </cofactor>
</comment>
<comment type="biophysicochemical properties">
    <kinetics>
        <KM evidence="4">148 uM for pyruvate</KM>
    </kinetics>
</comment>
<comment type="subunit">
    <text evidence="3">Eukaryotic pyruvate dehydrogenase (PDH) complexes are organized as a core consisting of the oligomeric dihydrolipoamide acetyl-transferase (E2), around which are arranged multiple copies of pyruvate dehydrogenase (E1), dihydrolipoamide dehydrogenase (E3) and protein X (E3BP) bound by non-covalent bonds (PubMed:33567276). The Chaetomium thermophilum PDH complex contains 60 E2 units, 12 E3BP units, about 20 E1 units, and 12 or more E3 units (PubMed:33567276). The units are organized in 1 E2 60-mer, 4 E3BP trimers, about 20 E1 tetramers, and a maximum of 12 E3 dimers (PubMed:33567276). Pyruvate dehydrogenase (E1) is active as a tetramer of 2 alpha and 2 beta subunits (PubMed:33567276). The E3BP trimers are bound inside the icosahedral core with tetrahedral symmetry (PubMed:33567276).</text>
</comment>
<comment type="subcellular location">
    <subcellularLocation>
        <location evidence="2">Mitochondrion</location>
    </subcellularLocation>
</comment>
<evidence type="ECO:0000250" key="1">
    <source>
        <dbReference type="UniProtKB" id="P11177"/>
    </source>
</evidence>
<evidence type="ECO:0000255" key="2"/>
<evidence type="ECO:0000269" key="3">
    <source>
    </source>
</evidence>
<evidence type="ECO:0000269" key="4">
    <source>
    </source>
</evidence>
<evidence type="ECO:0000303" key="5">
    <source>
    </source>
</evidence>
<evidence type="ECO:0000305" key="6"/>
<evidence type="ECO:0000305" key="7">
    <source>
    </source>
</evidence>
<proteinExistence type="evidence at protein level"/>
<sequence>MSRFLRPAFRLATTATRASTIRPTPSSLITKAAAVPTTRLLQKRSYAAEATGVKEYTVREALNEALAEELESNPKVFILGEEVAQYNGAYKVTKGLLDRFGEKRVIDTPITEMGFAGLAVGAALAGLQPVCEFMTFNFAMQAIDHIVNSAAKTLYMSGGIQPCNITFRGPNGFAAGVAAQHSQDYAAWYGSIPGLKVVSPWSAEDAKGLLKAAIRDPNPVVVLENELMYGVSFPMSEAAQKDDFVLPFGKAKIERAGKDLTIVSLSRCVGQSLVAAENLKKKYGIEAEVINLRSIKPLDVEAIVKSVKKTHRLLAVESGFPAFGVGAEILALTMEYAFDYLDTPAQRITGADVPTPYAQKLEEMSFPTEQLIEDYAAKMLRV</sequence>
<feature type="transit peptide" description="Mitochondrion" evidence="2">
    <location>
        <begin position="1"/>
        <end position="46"/>
    </location>
</feature>
<feature type="chain" id="PRO_0000456221" description="Pyruvate dehydrogenase E1 component subunit beta, mitochondrial" evidence="2">
    <location>
        <begin position="47"/>
        <end position="382"/>
    </location>
</feature>
<feature type="binding site" evidence="1">
    <location>
        <position position="112"/>
    </location>
    <ligand>
        <name>thiamine diphosphate</name>
        <dbReference type="ChEBI" id="CHEBI:58937"/>
        <note>ligand shared with alpha subunit</note>
    </ligand>
</feature>
<feature type="binding site" evidence="1">
    <location>
        <position position="165"/>
    </location>
    <ligand>
        <name>K(+)</name>
        <dbReference type="ChEBI" id="CHEBI:29103"/>
        <note>structural</note>
    </ligand>
</feature>
<feature type="binding site" evidence="1">
    <location>
        <position position="213"/>
    </location>
    <ligand>
        <name>K(+)</name>
        <dbReference type="ChEBI" id="CHEBI:29103"/>
        <note>structural</note>
    </ligand>
</feature>
<feature type="binding site" evidence="1">
    <location>
        <position position="214"/>
    </location>
    <ligand>
        <name>K(+)</name>
        <dbReference type="ChEBI" id="CHEBI:29103"/>
        <note>structural</note>
    </ligand>
</feature>
<feature type="binding site" evidence="1">
    <location>
        <position position="216"/>
    </location>
    <ligand>
        <name>K(+)</name>
        <dbReference type="ChEBI" id="CHEBI:29103"/>
        <note>structural</note>
    </ligand>
</feature>
<feature type="binding site" evidence="1">
    <location>
        <position position="218"/>
    </location>
    <ligand>
        <name>K(+)</name>
        <dbReference type="ChEBI" id="CHEBI:29103"/>
        <note>structural</note>
    </ligand>
</feature>
<reference key="1">
    <citation type="journal article" date="2011" name="Cell">
        <title>Insight into structure and assembly of the nuclear pore complex by utilizing the genome of a eukaryotic thermophile.</title>
        <authorList>
            <person name="Amlacher S."/>
            <person name="Sarges P."/>
            <person name="Flemming D."/>
            <person name="van Noort V."/>
            <person name="Kunze R."/>
            <person name="Devos D.P."/>
            <person name="Arumugam M."/>
            <person name="Bork P."/>
            <person name="Hurt E."/>
        </authorList>
    </citation>
    <scope>NUCLEOTIDE SEQUENCE [LARGE SCALE GENOMIC DNA]</scope>
    <source>
        <strain>DSM 1495 / CBS 144.50 / IMI 039719</strain>
    </source>
</reference>
<reference key="2">
    <citation type="journal article" date="2021" name="Cell Rep.">
        <title>Integrative structure of a 10-megadalton eukaryotic pyruvate dehydrogenase complex from native cell extracts.</title>
        <authorList>
            <person name="Kyrilis F.L."/>
            <person name="Semchonok D.A."/>
            <person name="Skalidis I."/>
            <person name="Tueting C."/>
            <person name="Hamdi F."/>
            <person name="O'Reilly F.J."/>
            <person name="Rappsilber J."/>
            <person name="Kastritis P.L."/>
        </authorList>
    </citation>
    <scope>FUNCTION</scope>
    <scope>CATALYTIC ACTIVITY</scope>
    <scope>SUBUNIT</scope>
</reference>
<reference key="3">
    <citation type="journal article" date="2021" name="Nat. Commun.">
        <title>Cryo-EM snapshots of a native lysate provide structural insights into a metabolon-embedded transacetylase reaction.</title>
        <authorList>
            <person name="Tueting C."/>
            <person name="Kyrilis F.L."/>
            <person name="Mueller J."/>
            <person name="Sorokina M."/>
            <person name="Skalidis I."/>
            <person name="Hamdi F."/>
            <person name="Sadian Y."/>
            <person name="Kastritis P.L."/>
        </authorList>
    </citation>
    <scope>FUNCTION</scope>
    <scope>CATALYTIC ACTIVITY</scope>
    <scope>BIOPHYSICOCHEMICAL PROPERTIES</scope>
</reference>
<keyword id="KW-0479">Metal-binding</keyword>
<keyword id="KW-0496">Mitochondrion</keyword>
<keyword id="KW-0560">Oxidoreductase</keyword>
<keyword id="KW-0630">Potassium</keyword>
<keyword id="KW-0670">Pyruvate</keyword>
<keyword id="KW-1185">Reference proteome</keyword>
<keyword id="KW-0786">Thiamine pyrophosphate</keyword>
<keyword id="KW-0809">Transit peptide</keyword>
<dbReference type="EC" id="1.2.4.1" evidence="3 4"/>
<dbReference type="EMBL" id="GL988032">
    <property type="protein sequence ID" value="EGS23926.1"/>
    <property type="molecule type" value="Genomic_DNA"/>
</dbReference>
<dbReference type="RefSeq" id="XP_006691168.1">
    <property type="nucleotide sequence ID" value="XM_006691105.1"/>
</dbReference>
<dbReference type="SMR" id="G0RYE0"/>
<dbReference type="STRING" id="759272.G0RYE0"/>
<dbReference type="GeneID" id="18254673"/>
<dbReference type="KEGG" id="cthr:CTHT_0006350"/>
<dbReference type="eggNOG" id="KOG0524">
    <property type="taxonomic scope" value="Eukaryota"/>
</dbReference>
<dbReference type="HOGENOM" id="CLU_012907_1_1_1"/>
<dbReference type="OMA" id="WYANCPG"/>
<dbReference type="OrthoDB" id="10266385at2759"/>
<dbReference type="Proteomes" id="UP000008066">
    <property type="component" value="Unassembled WGS sequence"/>
</dbReference>
<dbReference type="GO" id="GO:0005739">
    <property type="term" value="C:mitochondrion"/>
    <property type="evidence" value="ECO:0007669"/>
    <property type="project" value="UniProtKB-SubCell"/>
</dbReference>
<dbReference type="GO" id="GO:0046872">
    <property type="term" value="F:metal ion binding"/>
    <property type="evidence" value="ECO:0007669"/>
    <property type="project" value="UniProtKB-KW"/>
</dbReference>
<dbReference type="GO" id="GO:0004739">
    <property type="term" value="F:pyruvate dehydrogenase (acetyl-transferring) activity"/>
    <property type="evidence" value="ECO:0007669"/>
    <property type="project" value="UniProtKB-EC"/>
</dbReference>
<dbReference type="GO" id="GO:0006086">
    <property type="term" value="P:pyruvate decarboxylation to acetyl-CoA"/>
    <property type="evidence" value="ECO:0007669"/>
    <property type="project" value="InterPro"/>
</dbReference>
<dbReference type="CDD" id="cd07036">
    <property type="entry name" value="TPP_PYR_E1-PDHc-beta_like"/>
    <property type="match status" value="1"/>
</dbReference>
<dbReference type="FunFam" id="3.40.50.920:FF:000001">
    <property type="entry name" value="Pyruvate dehydrogenase E1 beta subunit"/>
    <property type="match status" value="1"/>
</dbReference>
<dbReference type="FunFam" id="3.40.50.970:FF:000006">
    <property type="entry name" value="Pyruvate dehydrogenase E1 component subunit beta"/>
    <property type="match status" value="1"/>
</dbReference>
<dbReference type="Gene3D" id="3.40.50.920">
    <property type="match status" value="1"/>
</dbReference>
<dbReference type="Gene3D" id="3.40.50.970">
    <property type="match status" value="1"/>
</dbReference>
<dbReference type="InterPro" id="IPR027110">
    <property type="entry name" value="PDHB_mito-type"/>
</dbReference>
<dbReference type="InterPro" id="IPR029061">
    <property type="entry name" value="THDP-binding"/>
</dbReference>
<dbReference type="InterPro" id="IPR009014">
    <property type="entry name" value="Transketo_C/PFOR_II"/>
</dbReference>
<dbReference type="InterPro" id="IPR005475">
    <property type="entry name" value="Transketolase-like_Pyr-bd"/>
</dbReference>
<dbReference type="InterPro" id="IPR033248">
    <property type="entry name" value="Transketolase_C"/>
</dbReference>
<dbReference type="NCBIfam" id="NF006667">
    <property type="entry name" value="PRK09212.1"/>
    <property type="match status" value="1"/>
</dbReference>
<dbReference type="NCBIfam" id="NF008854">
    <property type="entry name" value="PRK11892.1"/>
    <property type="match status" value="1"/>
</dbReference>
<dbReference type="PANTHER" id="PTHR11624">
    <property type="entry name" value="DEHYDROGENASE RELATED"/>
    <property type="match status" value="1"/>
</dbReference>
<dbReference type="PANTHER" id="PTHR11624:SF96">
    <property type="entry name" value="PYRUVATE DEHYDROGENASE E1 COMPONENT SUBUNIT BETA, MITOCHONDRIAL"/>
    <property type="match status" value="1"/>
</dbReference>
<dbReference type="Pfam" id="PF02779">
    <property type="entry name" value="Transket_pyr"/>
    <property type="match status" value="1"/>
</dbReference>
<dbReference type="Pfam" id="PF02780">
    <property type="entry name" value="Transketolase_C"/>
    <property type="match status" value="1"/>
</dbReference>
<dbReference type="SMART" id="SM00861">
    <property type="entry name" value="Transket_pyr"/>
    <property type="match status" value="1"/>
</dbReference>
<dbReference type="SUPFAM" id="SSF52518">
    <property type="entry name" value="Thiamin diphosphate-binding fold (THDP-binding)"/>
    <property type="match status" value="1"/>
</dbReference>
<dbReference type="SUPFAM" id="SSF52922">
    <property type="entry name" value="TK C-terminal domain-like"/>
    <property type="match status" value="1"/>
</dbReference>
<protein>
    <recommendedName>
        <fullName evidence="5">Pyruvate dehydrogenase E1 component subunit beta, mitochondrial</fullName>
        <ecNumber evidence="3 4">1.2.4.1</ecNumber>
    </recommendedName>
    <alternativeName>
        <fullName evidence="5">Pyruvate dehydrogenase complex component E1 beta</fullName>
        <shortName evidence="6">PDHE1-B</shortName>
    </alternativeName>
</protein>